<organism>
    <name type="scientific">Haemophilus influenzae (strain PittGG)</name>
    <dbReference type="NCBI Taxonomy" id="374931"/>
    <lineage>
        <taxon>Bacteria</taxon>
        <taxon>Pseudomonadati</taxon>
        <taxon>Pseudomonadota</taxon>
        <taxon>Gammaproteobacteria</taxon>
        <taxon>Pasteurellales</taxon>
        <taxon>Pasteurellaceae</taxon>
        <taxon>Haemophilus</taxon>
    </lineage>
</organism>
<proteinExistence type="inferred from homology"/>
<keyword id="KW-1003">Cell membrane</keyword>
<keyword id="KW-0472">Membrane</keyword>
<keyword id="KW-0677">Repeat</keyword>
<keyword id="KW-0812">Transmembrane</keyword>
<keyword id="KW-1133">Transmembrane helix</keyword>
<keyword id="KW-0813">Transport</keyword>
<evidence type="ECO:0000255" key="1">
    <source>
        <dbReference type="HAMAP-Rule" id="MF_01016"/>
    </source>
</evidence>
<name>Y2670_HAEIG</name>
<accession>A5UFK5</accession>
<reference key="1">
    <citation type="journal article" date="2007" name="Genome Biol.">
        <title>Characterization and modeling of the Haemophilus influenzae core and supragenomes based on the complete genomic sequences of Rd and 12 clinical nontypeable strains.</title>
        <authorList>
            <person name="Hogg J.S."/>
            <person name="Hu F.Z."/>
            <person name="Janto B."/>
            <person name="Boissy R."/>
            <person name="Hayes J."/>
            <person name="Keefe R."/>
            <person name="Post J.C."/>
            <person name="Ehrlich G.D."/>
        </authorList>
    </citation>
    <scope>NUCLEOTIDE SEQUENCE [LARGE SCALE GENOMIC DNA]</scope>
    <source>
        <strain>PittGG</strain>
    </source>
</reference>
<dbReference type="EMBL" id="CP000672">
    <property type="protein sequence ID" value="ABQ99560.1"/>
    <property type="molecule type" value="Genomic_DNA"/>
</dbReference>
<dbReference type="SMR" id="A5UFK5"/>
<dbReference type="KEGG" id="hiq:CGSHiGG_02670"/>
<dbReference type="HOGENOM" id="CLU_035023_3_1_6"/>
<dbReference type="Proteomes" id="UP000001990">
    <property type="component" value="Chromosome"/>
</dbReference>
<dbReference type="GO" id="GO:0005886">
    <property type="term" value="C:plasma membrane"/>
    <property type="evidence" value="ECO:0007669"/>
    <property type="project" value="UniProtKB-SubCell"/>
</dbReference>
<dbReference type="GO" id="GO:0008324">
    <property type="term" value="F:monoatomic cation transmembrane transporter activity"/>
    <property type="evidence" value="ECO:0007669"/>
    <property type="project" value="InterPro"/>
</dbReference>
<dbReference type="GO" id="GO:0006813">
    <property type="term" value="P:potassium ion transport"/>
    <property type="evidence" value="ECO:0007669"/>
    <property type="project" value="InterPro"/>
</dbReference>
<dbReference type="Gene3D" id="3.30.70.1450">
    <property type="entry name" value="Regulator of K+ conductance, C-terminal domain"/>
    <property type="match status" value="2"/>
</dbReference>
<dbReference type="HAMAP" id="MF_01016">
    <property type="entry name" value="YidE"/>
    <property type="match status" value="1"/>
</dbReference>
<dbReference type="InterPro" id="IPR050144">
    <property type="entry name" value="AAE_transporter"/>
</dbReference>
<dbReference type="InterPro" id="IPR006037">
    <property type="entry name" value="RCK_C"/>
</dbReference>
<dbReference type="InterPro" id="IPR036721">
    <property type="entry name" value="RCK_C_sf"/>
</dbReference>
<dbReference type="InterPro" id="IPR023018">
    <property type="entry name" value="Transpt_YidE_put"/>
</dbReference>
<dbReference type="InterPro" id="IPR006512">
    <property type="entry name" value="YidE_YbjL"/>
</dbReference>
<dbReference type="NCBIfam" id="NF003007">
    <property type="entry name" value="PRK03818.1"/>
    <property type="match status" value="1"/>
</dbReference>
<dbReference type="NCBIfam" id="TIGR01625">
    <property type="entry name" value="YidE_YbjL_dupl"/>
    <property type="match status" value="2"/>
</dbReference>
<dbReference type="PANTHER" id="PTHR30445">
    <property type="entry name" value="K(+)_H(+) ANTIPORTER SUBUNIT KHTT"/>
    <property type="match status" value="1"/>
</dbReference>
<dbReference type="PANTHER" id="PTHR30445:SF3">
    <property type="entry name" value="TRANSPORT PROTEIN YIDE-RELATED"/>
    <property type="match status" value="1"/>
</dbReference>
<dbReference type="Pfam" id="PF06826">
    <property type="entry name" value="Asp-Al_Ex"/>
    <property type="match status" value="2"/>
</dbReference>
<dbReference type="Pfam" id="PF02080">
    <property type="entry name" value="TrkA_C"/>
    <property type="match status" value="1"/>
</dbReference>
<dbReference type="SUPFAM" id="SSF116726">
    <property type="entry name" value="TrkA C-terminal domain-like"/>
    <property type="match status" value="2"/>
</dbReference>
<dbReference type="PROSITE" id="PS51202">
    <property type="entry name" value="RCK_C"/>
    <property type="match status" value="2"/>
</dbReference>
<comment type="subcellular location">
    <subcellularLocation>
        <location evidence="1">Cell membrane</location>
        <topology evidence="1">Multi-pass membrane protein</topology>
    </subcellularLocation>
</comment>
<comment type="similarity">
    <text evidence="1">Belongs to the AAE transporter (TC 2.A.81) family. YidE subfamily.</text>
</comment>
<sequence length="551" mass="59000">MSDIAITISLLALVAVIGLWIGHWKIRGVGLGIGGVLFGGIIVAHFTNQYGLKLDAHTLHFVQEFGLILFVYTIGIQVGPGFFSSLRKSGLKLNAFAILIIVLGSIAVVLVHKIADVPLDIALGIYSGAVTNTPALGAGQQILAELGVPQTTVTMGVSYAMAYPFGICGILLAMWLIRLFFNVKVDDEAARFNAESSQDKESLHNISLKVTNQNLDGLTLIQIPGFSDEEVVCSRLKRDDMEIVPKASTEIRTNDILQLVGDDNSLAKMRLIIGHEVDAPTVAYSGEIRSERVVVTNEKVLGKKIRALGIHQKYGVVISRLNRAGIELVPTGNTTLQFGDVLHMVGRSDVLNQAISVIGNAQQKLLQVQMLPVFIGIGLGVLVGSIPFYIPGFPVALKLGLAGGPLVVALILARIGTIGKLYWFMPPSANLALREIGIVLFLAVVGLKSGGSFFDTLVNGSGLEWMGYGIFITFVPLIIVGTIARLYGKLNYLTICGLLAGSMTDPPALAFANEIKEDNGAAALSYATVYPLVMFLRIMSPQLLAVLLWAA</sequence>
<gene>
    <name type="ordered locus">CGSHiGG_02670</name>
</gene>
<feature type="chain" id="PRO_1000063252" description="Putative transport protein CGSHiGG_02670">
    <location>
        <begin position="1"/>
        <end position="551"/>
    </location>
</feature>
<feature type="transmembrane region" description="Helical" evidence="1">
    <location>
        <begin position="4"/>
        <end position="24"/>
    </location>
</feature>
<feature type="transmembrane region" description="Helical" evidence="1">
    <location>
        <begin position="28"/>
        <end position="48"/>
    </location>
</feature>
<feature type="transmembrane region" description="Helical" evidence="1">
    <location>
        <begin position="65"/>
        <end position="85"/>
    </location>
</feature>
<feature type="transmembrane region" description="Helical" evidence="1">
    <location>
        <begin position="95"/>
        <end position="115"/>
    </location>
</feature>
<feature type="transmembrane region" description="Helical" evidence="1">
    <location>
        <begin position="157"/>
        <end position="177"/>
    </location>
</feature>
<feature type="transmembrane region" description="Helical" evidence="1">
    <location>
        <begin position="370"/>
        <end position="390"/>
    </location>
</feature>
<feature type="transmembrane region" description="Helical" evidence="1">
    <location>
        <begin position="402"/>
        <end position="424"/>
    </location>
</feature>
<feature type="transmembrane region" description="Helical" evidence="1">
    <location>
        <begin position="438"/>
        <end position="458"/>
    </location>
</feature>
<feature type="transmembrane region" description="Helical" evidence="1">
    <location>
        <begin position="463"/>
        <end position="483"/>
    </location>
</feature>
<feature type="transmembrane region" description="Helical" evidence="1">
    <location>
        <begin position="492"/>
        <end position="512"/>
    </location>
</feature>
<feature type="transmembrane region" description="Helical" evidence="1">
    <location>
        <begin position="529"/>
        <end position="549"/>
    </location>
</feature>
<feature type="domain" description="RCK C-terminal 1" evidence="1">
    <location>
        <begin position="191"/>
        <end position="275"/>
    </location>
</feature>
<feature type="domain" description="RCK C-terminal 2" evidence="1">
    <location>
        <begin position="277"/>
        <end position="360"/>
    </location>
</feature>
<protein>
    <recommendedName>
        <fullName evidence="1">Putative transport protein CGSHiGG_02670</fullName>
    </recommendedName>
</protein>